<keyword id="KW-0963">Cytoplasm</keyword>
<gene>
    <name evidence="1" type="primary">cutC</name>
    <name type="ordered locus">STY2115</name>
    <name type="ordered locus">t0970</name>
</gene>
<comment type="subunit">
    <text evidence="1">Homodimer.</text>
</comment>
<comment type="subcellular location">
    <subcellularLocation>
        <location evidence="1">Cytoplasm</location>
    </subcellularLocation>
</comment>
<comment type="similarity">
    <text evidence="1">Belongs to the CutC family.</text>
</comment>
<comment type="caution">
    <text evidence="1">Once thought to be involved in copper homeostasis, experiments in E.coli have shown this is not the case.</text>
</comment>
<dbReference type="EMBL" id="AL513382">
    <property type="protein sequence ID" value="CAD05658.1"/>
    <property type="molecule type" value="Genomic_DNA"/>
</dbReference>
<dbReference type="EMBL" id="AE014613">
    <property type="protein sequence ID" value="AAO68642.1"/>
    <property type="molecule type" value="Genomic_DNA"/>
</dbReference>
<dbReference type="RefSeq" id="NP_456474.1">
    <property type="nucleotide sequence ID" value="NC_003198.1"/>
</dbReference>
<dbReference type="SMR" id="Q8Z5V9"/>
<dbReference type="STRING" id="220341.gene:17586023"/>
<dbReference type="KEGG" id="stt:t0970"/>
<dbReference type="KEGG" id="sty:STY2115"/>
<dbReference type="PATRIC" id="fig|220341.7.peg.2125"/>
<dbReference type="eggNOG" id="COG3142">
    <property type="taxonomic scope" value="Bacteria"/>
</dbReference>
<dbReference type="HOGENOM" id="CLU_050555_3_1_6"/>
<dbReference type="OMA" id="HRAFDQC"/>
<dbReference type="OrthoDB" id="9815677at2"/>
<dbReference type="Proteomes" id="UP000000541">
    <property type="component" value="Chromosome"/>
</dbReference>
<dbReference type="Proteomes" id="UP000002670">
    <property type="component" value="Chromosome"/>
</dbReference>
<dbReference type="GO" id="GO:0005737">
    <property type="term" value="C:cytoplasm"/>
    <property type="evidence" value="ECO:0007669"/>
    <property type="project" value="UniProtKB-SubCell"/>
</dbReference>
<dbReference type="GO" id="GO:0005507">
    <property type="term" value="F:copper ion binding"/>
    <property type="evidence" value="ECO:0007669"/>
    <property type="project" value="TreeGrafter"/>
</dbReference>
<dbReference type="FunFam" id="3.20.20.380:FF:000001">
    <property type="entry name" value="Copper homeostasis protein CutC"/>
    <property type="match status" value="1"/>
</dbReference>
<dbReference type="Gene3D" id="3.20.20.380">
    <property type="entry name" value="Copper homeostasis (CutC) domain"/>
    <property type="match status" value="1"/>
</dbReference>
<dbReference type="HAMAP" id="MF_00795">
    <property type="entry name" value="CutC"/>
    <property type="match status" value="1"/>
</dbReference>
<dbReference type="InterPro" id="IPR005627">
    <property type="entry name" value="CutC-like"/>
</dbReference>
<dbReference type="InterPro" id="IPR036822">
    <property type="entry name" value="CutC-like_dom_sf"/>
</dbReference>
<dbReference type="NCBIfam" id="NF008603">
    <property type="entry name" value="PRK11572.1"/>
    <property type="match status" value="1"/>
</dbReference>
<dbReference type="PANTHER" id="PTHR12598">
    <property type="entry name" value="COPPER HOMEOSTASIS PROTEIN CUTC"/>
    <property type="match status" value="1"/>
</dbReference>
<dbReference type="PANTHER" id="PTHR12598:SF0">
    <property type="entry name" value="COPPER HOMEOSTASIS PROTEIN CUTC HOMOLOG"/>
    <property type="match status" value="1"/>
</dbReference>
<dbReference type="Pfam" id="PF03932">
    <property type="entry name" value="CutC"/>
    <property type="match status" value="1"/>
</dbReference>
<dbReference type="SUPFAM" id="SSF110395">
    <property type="entry name" value="CutC-like"/>
    <property type="match status" value="1"/>
</dbReference>
<organism>
    <name type="scientific">Salmonella typhi</name>
    <dbReference type="NCBI Taxonomy" id="90370"/>
    <lineage>
        <taxon>Bacteria</taxon>
        <taxon>Pseudomonadati</taxon>
        <taxon>Pseudomonadota</taxon>
        <taxon>Gammaproteobacteria</taxon>
        <taxon>Enterobacterales</taxon>
        <taxon>Enterobacteriaceae</taxon>
        <taxon>Salmonella</taxon>
    </lineage>
</organism>
<evidence type="ECO:0000255" key="1">
    <source>
        <dbReference type="HAMAP-Rule" id="MF_00795"/>
    </source>
</evidence>
<protein>
    <recommendedName>
        <fullName evidence="1">PF03932 family protein CutC</fullName>
    </recommendedName>
</protein>
<sequence>MALLEICCYSMECALTAQRNGADRIELCAAPKEGGLTPSFGILRSVREHITIPVHPIIRPRGGDFYYTDGEFAAMLEDIRLVRELGFPGLVTGVLTVDGDVDMSRMEKIMAAAGPLAVTFHRAFDMCANPFNALKNLADAGVARVLTSGQKADAAQGLSIIMELIAQGDAPIIMAGAGVRANNLQNFLDAGVREVHSSAGVLLPSPMRYRNQGLSMSADIQADEYSRYRVEGAAVAENERNHCSPSGQMIFTVASCRPI</sequence>
<proteinExistence type="inferred from homology"/>
<name>CUTC_SALTI</name>
<feature type="chain" id="PRO_0000215074" description="PF03932 family protein CutC">
    <location>
        <begin position="1"/>
        <end position="259"/>
    </location>
</feature>
<accession>Q8Z5V9</accession>
<accession>Q7CAL4</accession>
<reference key="1">
    <citation type="journal article" date="2001" name="Nature">
        <title>Complete genome sequence of a multiple drug resistant Salmonella enterica serovar Typhi CT18.</title>
        <authorList>
            <person name="Parkhill J."/>
            <person name="Dougan G."/>
            <person name="James K.D."/>
            <person name="Thomson N.R."/>
            <person name="Pickard D."/>
            <person name="Wain J."/>
            <person name="Churcher C.M."/>
            <person name="Mungall K.L."/>
            <person name="Bentley S.D."/>
            <person name="Holden M.T.G."/>
            <person name="Sebaihia M."/>
            <person name="Baker S."/>
            <person name="Basham D."/>
            <person name="Brooks K."/>
            <person name="Chillingworth T."/>
            <person name="Connerton P."/>
            <person name="Cronin A."/>
            <person name="Davis P."/>
            <person name="Davies R.M."/>
            <person name="Dowd L."/>
            <person name="White N."/>
            <person name="Farrar J."/>
            <person name="Feltwell T."/>
            <person name="Hamlin N."/>
            <person name="Haque A."/>
            <person name="Hien T.T."/>
            <person name="Holroyd S."/>
            <person name="Jagels K."/>
            <person name="Krogh A."/>
            <person name="Larsen T.S."/>
            <person name="Leather S."/>
            <person name="Moule S."/>
            <person name="O'Gaora P."/>
            <person name="Parry C."/>
            <person name="Quail M.A."/>
            <person name="Rutherford K.M."/>
            <person name="Simmonds M."/>
            <person name="Skelton J."/>
            <person name="Stevens K."/>
            <person name="Whitehead S."/>
            <person name="Barrell B.G."/>
        </authorList>
    </citation>
    <scope>NUCLEOTIDE SEQUENCE [LARGE SCALE GENOMIC DNA]</scope>
    <source>
        <strain>CT18</strain>
    </source>
</reference>
<reference key="2">
    <citation type="journal article" date="2003" name="J. Bacteriol.">
        <title>Comparative genomics of Salmonella enterica serovar Typhi strains Ty2 and CT18.</title>
        <authorList>
            <person name="Deng W."/>
            <person name="Liou S.-R."/>
            <person name="Plunkett G. III"/>
            <person name="Mayhew G.F."/>
            <person name="Rose D.J."/>
            <person name="Burland V."/>
            <person name="Kodoyianni V."/>
            <person name="Schwartz D.C."/>
            <person name="Blattner F.R."/>
        </authorList>
    </citation>
    <scope>NUCLEOTIDE SEQUENCE [LARGE SCALE GENOMIC DNA]</scope>
    <source>
        <strain>ATCC 700931 / Ty2</strain>
    </source>
</reference>